<name>RUVB_SODGM</name>
<sequence>MIEADRLMSAAAVTGEEVIDRAIRPKKLEDYIGQPHVLEQMEIFIQAAKMRGDALDHLLISGPPGLGKTTLANIVANEMGVNLRTTSGPVLEKAGDLAAMLTSLEPHDVLFIDEIHRLSPVVEEVLYPAMEDYQLDIMIGEGPAGRSIKIELPPFTLVGATTRAGSLTPPLRDRFGIVQRLEFYQTGDLQHIVSRSAVCLALNITEGGAREIARRARGTPRIANRLLRRVRDFAEVRAAGHITDDVAVSALNMLNVDTEGFDFMDRKLLLAIIDKFVGGPVGLDNLAAAIGEERETIEDVLEPFLIQQGFIQRTPRGRIATVHAYRHFGLEEHGGDPE</sequence>
<dbReference type="EC" id="3.6.4.-" evidence="1"/>
<dbReference type="EMBL" id="AP008232">
    <property type="protein sequence ID" value="BAE74537.1"/>
    <property type="molecule type" value="Genomic_DNA"/>
</dbReference>
<dbReference type="RefSeq" id="WP_011411091.1">
    <property type="nucleotide sequence ID" value="NC_007712.1"/>
</dbReference>
<dbReference type="SMR" id="Q2NTI8"/>
<dbReference type="STRING" id="343509.SG1262"/>
<dbReference type="KEGG" id="sgl:SG1262"/>
<dbReference type="eggNOG" id="COG2255">
    <property type="taxonomic scope" value="Bacteria"/>
</dbReference>
<dbReference type="HOGENOM" id="CLU_055599_1_0_6"/>
<dbReference type="OrthoDB" id="9804478at2"/>
<dbReference type="Proteomes" id="UP000001932">
    <property type="component" value="Chromosome"/>
</dbReference>
<dbReference type="GO" id="GO:0005737">
    <property type="term" value="C:cytoplasm"/>
    <property type="evidence" value="ECO:0007669"/>
    <property type="project" value="UniProtKB-SubCell"/>
</dbReference>
<dbReference type="GO" id="GO:0048476">
    <property type="term" value="C:Holliday junction resolvase complex"/>
    <property type="evidence" value="ECO:0007669"/>
    <property type="project" value="UniProtKB-UniRule"/>
</dbReference>
<dbReference type="GO" id="GO:0005524">
    <property type="term" value="F:ATP binding"/>
    <property type="evidence" value="ECO:0007669"/>
    <property type="project" value="UniProtKB-UniRule"/>
</dbReference>
<dbReference type="GO" id="GO:0016887">
    <property type="term" value="F:ATP hydrolysis activity"/>
    <property type="evidence" value="ECO:0007669"/>
    <property type="project" value="InterPro"/>
</dbReference>
<dbReference type="GO" id="GO:0000400">
    <property type="term" value="F:four-way junction DNA binding"/>
    <property type="evidence" value="ECO:0007669"/>
    <property type="project" value="UniProtKB-UniRule"/>
</dbReference>
<dbReference type="GO" id="GO:0009378">
    <property type="term" value="F:four-way junction helicase activity"/>
    <property type="evidence" value="ECO:0007669"/>
    <property type="project" value="InterPro"/>
</dbReference>
<dbReference type="GO" id="GO:0006310">
    <property type="term" value="P:DNA recombination"/>
    <property type="evidence" value="ECO:0007669"/>
    <property type="project" value="UniProtKB-UniRule"/>
</dbReference>
<dbReference type="GO" id="GO:0006281">
    <property type="term" value="P:DNA repair"/>
    <property type="evidence" value="ECO:0007669"/>
    <property type="project" value="UniProtKB-UniRule"/>
</dbReference>
<dbReference type="CDD" id="cd00009">
    <property type="entry name" value="AAA"/>
    <property type="match status" value="1"/>
</dbReference>
<dbReference type="FunFam" id="1.10.10.10:FF:000086">
    <property type="entry name" value="Holliday junction ATP-dependent DNA helicase RuvB"/>
    <property type="match status" value="1"/>
</dbReference>
<dbReference type="FunFam" id="1.10.8.60:FF:000023">
    <property type="entry name" value="Holliday junction ATP-dependent DNA helicase RuvB"/>
    <property type="match status" value="1"/>
</dbReference>
<dbReference type="FunFam" id="3.40.50.300:FF:000073">
    <property type="entry name" value="Holliday junction ATP-dependent DNA helicase RuvB"/>
    <property type="match status" value="1"/>
</dbReference>
<dbReference type="Gene3D" id="1.10.8.60">
    <property type="match status" value="1"/>
</dbReference>
<dbReference type="Gene3D" id="3.40.50.300">
    <property type="entry name" value="P-loop containing nucleotide triphosphate hydrolases"/>
    <property type="match status" value="1"/>
</dbReference>
<dbReference type="Gene3D" id="1.10.10.10">
    <property type="entry name" value="Winged helix-like DNA-binding domain superfamily/Winged helix DNA-binding domain"/>
    <property type="match status" value="1"/>
</dbReference>
<dbReference type="HAMAP" id="MF_00016">
    <property type="entry name" value="DNA_HJ_migration_RuvB"/>
    <property type="match status" value="1"/>
</dbReference>
<dbReference type="InterPro" id="IPR003593">
    <property type="entry name" value="AAA+_ATPase"/>
</dbReference>
<dbReference type="InterPro" id="IPR041445">
    <property type="entry name" value="AAA_lid_4"/>
</dbReference>
<dbReference type="InterPro" id="IPR004605">
    <property type="entry name" value="DNA_helicase_Holl-junc_RuvB"/>
</dbReference>
<dbReference type="InterPro" id="IPR027417">
    <property type="entry name" value="P-loop_NTPase"/>
</dbReference>
<dbReference type="InterPro" id="IPR008824">
    <property type="entry name" value="RuvB-like_N"/>
</dbReference>
<dbReference type="InterPro" id="IPR008823">
    <property type="entry name" value="RuvB_C"/>
</dbReference>
<dbReference type="InterPro" id="IPR036388">
    <property type="entry name" value="WH-like_DNA-bd_sf"/>
</dbReference>
<dbReference type="InterPro" id="IPR036390">
    <property type="entry name" value="WH_DNA-bd_sf"/>
</dbReference>
<dbReference type="NCBIfam" id="NF000868">
    <property type="entry name" value="PRK00080.1"/>
    <property type="match status" value="1"/>
</dbReference>
<dbReference type="NCBIfam" id="TIGR00635">
    <property type="entry name" value="ruvB"/>
    <property type="match status" value="1"/>
</dbReference>
<dbReference type="PANTHER" id="PTHR42848">
    <property type="match status" value="1"/>
</dbReference>
<dbReference type="PANTHER" id="PTHR42848:SF1">
    <property type="entry name" value="HOLLIDAY JUNCTION BRANCH MIGRATION COMPLEX SUBUNIT RUVB"/>
    <property type="match status" value="1"/>
</dbReference>
<dbReference type="Pfam" id="PF17864">
    <property type="entry name" value="AAA_lid_4"/>
    <property type="match status" value="1"/>
</dbReference>
<dbReference type="Pfam" id="PF05491">
    <property type="entry name" value="RuvB_C"/>
    <property type="match status" value="1"/>
</dbReference>
<dbReference type="Pfam" id="PF05496">
    <property type="entry name" value="RuvB_N"/>
    <property type="match status" value="1"/>
</dbReference>
<dbReference type="SMART" id="SM00382">
    <property type="entry name" value="AAA"/>
    <property type="match status" value="1"/>
</dbReference>
<dbReference type="SUPFAM" id="SSF52540">
    <property type="entry name" value="P-loop containing nucleoside triphosphate hydrolases"/>
    <property type="match status" value="1"/>
</dbReference>
<dbReference type="SUPFAM" id="SSF46785">
    <property type="entry name" value="Winged helix' DNA-binding domain"/>
    <property type="match status" value="1"/>
</dbReference>
<feature type="chain" id="PRO_0000235407" description="Holliday junction branch migration complex subunit RuvB">
    <location>
        <begin position="1"/>
        <end position="338"/>
    </location>
</feature>
<feature type="region of interest" description="Large ATPase domain (RuvB-L)" evidence="1">
    <location>
        <begin position="4"/>
        <end position="184"/>
    </location>
</feature>
<feature type="region of interest" description="Small ATPAse domain (RuvB-S)" evidence="1">
    <location>
        <begin position="185"/>
        <end position="255"/>
    </location>
</feature>
<feature type="region of interest" description="Head domain (RuvB-H)" evidence="1">
    <location>
        <begin position="258"/>
        <end position="338"/>
    </location>
</feature>
<feature type="binding site" evidence="1">
    <location>
        <position position="23"/>
    </location>
    <ligand>
        <name>ATP</name>
        <dbReference type="ChEBI" id="CHEBI:30616"/>
    </ligand>
</feature>
<feature type="binding site" evidence="1">
    <location>
        <position position="24"/>
    </location>
    <ligand>
        <name>ATP</name>
        <dbReference type="ChEBI" id="CHEBI:30616"/>
    </ligand>
</feature>
<feature type="binding site" evidence="1">
    <location>
        <position position="65"/>
    </location>
    <ligand>
        <name>ATP</name>
        <dbReference type="ChEBI" id="CHEBI:30616"/>
    </ligand>
</feature>
<feature type="binding site" evidence="1">
    <location>
        <position position="68"/>
    </location>
    <ligand>
        <name>ATP</name>
        <dbReference type="ChEBI" id="CHEBI:30616"/>
    </ligand>
</feature>
<feature type="binding site" evidence="1">
    <location>
        <position position="69"/>
    </location>
    <ligand>
        <name>ATP</name>
        <dbReference type="ChEBI" id="CHEBI:30616"/>
    </ligand>
</feature>
<feature type="binding site" evidence="1">
    <location>
        <position position="69"/>
    </location>
    <ligand>
        <name>Mg(2+)</name>
        <dbReference type="ChEBI" id="CHEBI:18420"/>
    </ligand>
</feature>
<feature type="binding site" evidence="1">
    <location>
        <position position="70"/>
    </location>
    <ligand>
        <name>ATP</name>
        <dbReference type="ChEBI" id="CHEBI:30616"/>
    </ligand>
</feature>
<feature type="binding site" evidence="1">
    <location>
        <begin position="131"/>
        <end position="133"/>
    </location>
    <ligand>
        <name>ATP</name>
        <dbReference type="ChEBI" id="CHEBI:30616"/>
    </ligand>
</feature>
<feature type="binding site" evidence="1">
    <location>
        <position position="174"/>
    </location>
    <ligand>
        <name>ATP</name>
        <dbReference type="ChEBI" id="CHEBI:30616"/>
    </ligand>
</feature>
<feature type="binding site" evidence="1">
    <location>
        <position position="184"/>
    </location>
    <ligand>
        <name>ATP</name>
        <dbReference type="ChEBI" id="CHEBI:30616"/>
    </ligand>
</feature>
<feature type="binding site" evidence="1">
    <location>
        <position position="221"/>
    </location>
    <ligand>
        <name>ATP</name>
        <dbReference type="ChEBI" id="CHEBI:30616"/>
    </ligand>
</feature>
<feature type="binding site" evidence="1">
    <location>
        <position position="294"/>
    </location>
    <ligand>
        <name>DNA</name>
        <dbReference type="ChEBI" id="CHEBI:16991"/>
    </ligand>
</feature>
<feature type="binding site" evidence="1">
    <location>
        <position position="313"/>
    </location>
    <ligand>
        <name>DNA</name>
        <dbReference type="ChEBI" id="CHEBI:16991"/>
    </ligand>
</feature>
<feature type="binding site" evidence="1">
    <location>
        <position position="318"/>
    </location>
    <ligand>
        <name>DNA</name>
        <dbReference type="ChEBI" id="CHEBI:16991"/>
    </ligand>
</feature>
<accession>Q2NTI8</accession>
<proteinExistence type="inferred from homology"/>
<organism>
    <name type="scientific">Sodalis glossinidius (strain morsitans)</name>
    <dbReference type="NCBI Taxonomy" id="343509"/>
    <lineage>
        <taxon>Bacteria</taxon>
        <taxon>Pseudomonadati</taxon>
        <taxon>Pseudomonadota</taxon>
        <taxon>Gammaproteobacteria</taxon>
        <taxon>Enterobacterales</taxon>
        <taxon>Bruguierivoracaceae</taxon>
        <taxon>Sodalis</taxon>
    </lineage>
</organism>
<evidence type="ECO:0000255" key="1">
    <source>
        <dbReference type="HAMAP-Rule" id="MF_00016"/>
    </source>
</evidence>
<comment type="function">
    <text evidence="1">The RuvA-RuvB-RuvC complex processes Holliday junction (HJ) DNA during genetic recombination and DNA repair, while the RuvA-RuvB complex plays an important role in the rescue of blocked DNA replication forks via replication fork reversal (RFR). RuvA specifically binds to HJ cruciform DNA, conferring on it an open structure. The RuvB hexamer acts as an ATP-dependent pump, pulling dsDNA into and through the RuvAB complex. RuvB forms 2 homohexamers on either side of HJ DNA bound by 1 or 2 RuvA tetramers; 4 subunits per hexamer contact DNA at a time. Coordinated motions by a converter formed by DNA-disengaged RuvB subunits stimulates ATP hydrolysis and nucleotide exchange. Immobilization of the converter enables RuvB to convert the ATP-contained energy into a lever motion, pulling 2 nucleotides of DNA out of the RuvA tetramer per ATP hydrolyzed, thus driving DNA branch migration. The RuvB motors rotate together with the DNA substrate, which together with the progressing nucleotide cycle form the mechanistic basis for DNA recombination by continuous HJ branch migration. Branch migration allows RuvC to scan DNA until it finds its consensus sequence, where it cleaves and resolves cruciform DNA.</text>
</comment>
<comment type="catalytic activity">
    <reaction evidence="1">
        <text>ATP + H2O = ADP + phosphate + H(+)</text>
        <dbReference type="Rhea" id="RHEA:13065"/>
        <dbReference type="ChEBI" id="CHEBI:15377"/>
        <dbReference type="ChEBI" id="CHEBI:15378"/>
        <dbReference type="ChEBI" id="CHEBI:30616"/>
        <dbReference type="ChEBI" id="CHEBI:43474"/>
        <dbReference type="ChEBI" id="CHEBI:456216"/>
    </reaction>
</comment>
<comment type="subunit">
    <text evidence="1">Homohexamer. Forms an RuvA(8)-RuvB(12)-Holliday junction (HJ) complex. HJ DNA is sandwiched between 2 RuvA tetramers; dsDNA enters through RuvA and exits via RuvB. An RuvB hexamer assembles on each DNA strand where it exits the tetramer. Each RuvB hexamer is contacted by two RuvA subunits (via domain III) on 2 adjacent RuvB subunits; this complex drives branch migration. In the full resolvosome a probable DNA-RuvA(4)-RuvB(12)-RuvC(2) complex forms which resolves the HJ.</text>
</comment>
<comment type="subcellular location">
    <subcellularLocation>
        <location evidence="1">Cytoplasm</location>
    </subcellularLocation>
</comment>
<comment type="domain">
    <text evidence="1">Has 3 domains, the large (RuvB-L) and small ATPase (RuvB-S) domains and the C-terminal head (RuvB-H) domain. The head domain binds DNA, while the ATPase domains jointly bind ATP, ADP or are empty depending on the state of the subunit in the translocation cycle. During a single DNA translocation step the structure of each domain remains the same, but their relative positions change.</text>
</comment>
<comment type="similarity">
    <text evidence="1">Belongs to the RuvB family.</text>
</comment>
<protein>
    <recommendedName>
        <fullName evidence="1">Holliday junction branch migration complex subunit RuvB</fullName>
        <ecNumber evidence="1">3.6.4.-</ecNumber>
    </recommendedName>
</protein>
<gene>
    <name evidence="1" type="primary">ruvB</name>
    <name type="ordered locus">SG1262</name>
</gene>
<reference key="1">
    <citation type="journal article" date="2006" name="Genome Res.">
        <title>Massive genome erosion and functional adaptations provide insights into the symbiotic lifestyle of Sodalis glossinidius in the tsetse host.</title>
        <authorList>
            <person name="Toh H."/>
            <person name="Weiss B.L."/>
            <person name="Perkin S.A.H."/>
            <person name="Yamashita A."/>
            <person name="Oshima K."/>
            <person name="Hattori M."/>
            <person name="Aksoy S."/>
        </authorList>
    </citation>
    <scope>NUCLEOTIDE SEQUENCE [LARGE SCALE GENOMIC DNA]</scope>
    <source>
        <strain>morsitans</strain>
    </source>
</reference>
<keyword id="KW-0067">ATP-binding</keyword>
<keyword id="KW-0963">Cytoplasm</keyword>
<keyword id="KW-0227">DNA damage</keyword>
<keyword id="KW-0233">DNA recombination</keyword>
<keyword id="KW-0234">DNA repair</keyword>
<keyword id="KW-0238">DNA-binding</keyword>
<keyword id="KW-0378">Hydrolase</keyword>
<keyword id="KW-0547">Nucleotide-binding</keyword>